<dbReference type="EC" id="2.7.11.1"/>
<dbReference type="EMBL" id="AB036343">
    <property type="protein sequence ID" value="BAA88630.1"/>
    <property type="molecule type" value="mRNA"/>
</dbReference>
<dbReference type="EMBL" id="AB036342">
    <property type="protein sequence ID" value="BAA88629.1"/>
    <property type="molecule type" value="Genomic_DNA"/>
</dbReference>
<dbReference type="EMBL" id="CU329671">
    <property type="protein sequence ID" value="CAB76054.1"/>
    <property type="molecule type" value="Genomic_DNA"/>
</dbReference>
<dbReference type="PIR" id="T50362">
    <property type="entry name" value="T50362"/>
</dbReference>
<dbReference type="RefSeq" id="NP_596598.1">
    <property type="nucleotide sequence ID" value="NM_001022518.2"/>
</dbReference>
<dbReference type="SMR" id="Q9UQY9"/>
<dbReference type="BioGRID" id="277268">
    <property type="interactions" value="10"/>
</dbReference>
<dbReference type="FunCoup" id="Q9UQY9">
    <property type="interactions" value="333"/>
</dbReference>
<dbReference type="STRING" id="284812.Q9UQY9"/>
<dbReference type="PaxDb" id="4896-SPBC21C3.18.1"/>
<dbReference type="EnsemblFungi" id="SPBC21C3.18.1">
    <property type="protein sequence ID" value="SPBC21C3.18.1:pep"/>
    <property type="gene ID" value="SPBC21C3.18"/>
</dbReference>
<dbReference type="GeneID" id="2540745"/>
<dbReference type="KEGG" id="spo:2540745"/>
<dbReference type="PomBase" id="SPBC21C3.18">
    <property type="gene designation" value="spo4"/>
</dbReference>
<dbReference type="VEuPathDB" id="FungiDB:SPBC21C3.18"/>
<dbReference type="eggNOG" id="KOG1167">
    <property type="taxonomic scope" value="Eukaryota"/>
</dbReference>
<dbReference type="HOGENOM" id="CLU_000288_118_2_1"/>
<dbReference type="InParanoid" id="Q9UQY9"/>
<dbReference type="OMA" id="FFRCEDD"/>
<dbReference type="PhylomeDB" id="Q9UQY9"/>
<dbReference type="BRENDA" id="2.7.11.1">
    <property type="organism ID" value="5613"/>
</dbReference>
<dbReference type="PRO" id="PR:Q9UQY9"/>
<dbReference type="Proteomes" id="UP000002485">
    <property type="component" value="Chromosome II"/>
</dbReference>
<dbReference type="GO" id="GO:0005737">
    <property type="term" value="C:cytoplasm"/>
    <property type="evidence" value="ECO:0007005"/>
    <property type="project" value="PomBase"/>
</dbReference>
<dbReference type="GO" id="GO:0005829">
    <property type="term" value="C:cytosol"/>
    <property type="evidence" value="ECO:0007005"/>
    <property type="project" value="PomBase"/>
</dbReference>
<dbReference type="GO" id="GO:0005634">
    <property type="term" value="C:nucleus"/>
    <property type="evidence" value="ECO:0007005"/>
    <property type="project" value="PomBase"/>
</dbReference>
<dbReference type="GO" id="GO:0005524">
    <property type="term" value="F:ATP binding"/>
    <property type="evidence" value="ECO:0000255"/>
    <property type="project" value="PomBase"/>
</dbReference>
<dbReference type="GO" id="GO:0106310">
    <property type="term" value="F:protein serine kinase activity"/>
    <property type="evidence" value="ECO:0007669"/>
    <property type="project" value="RHEA"/>
</dbReference>
<dbReference type="GO" id="GO:0004674">
    <property type="term" value="F:protein serine/threonine kinase activity"/>
    <property type="evidence" value="ECO:0000318"/>
    <property type="project" value="GO_Central"/>
</dbReference>
<dbReference type="GO" id="GO:0031322">
    <property type="term" value="P:ascospore-type prospore-specific spindle pole body remodeling"/>
    <property type="evidence" value="ECO:0000315"/>
    <property type="project" value="PomBase"/>
</dbReference>
<dbReference type="GO" id="GO:0051301">
    <property type="term" value="P:cell division"/>
    <property type="evidence" value="ECO:0007669"/>
    <property type="project" value="UniProtKB-KW"/>
</dbReference>
<dbReference type="GO" id="GO:0007135">
    <property type="term" value="P:meiosis II"/>
    <property type="evidence" value="ECO:0000315"/>
    <property type="project" value="PomBase"/>
</dbReference>
<dbReference type="GO" id="GO:0007165">
    <property type="term" value="P:signal transduction"/>
    <property type="evidence" value="ECO:0000318"/>
    <property type="project" value="GO_Central"/>
</dbReference>
<dbReference type="CDD" id="cd14019">
    <property type="entry name" value="STKc_Cdc7"/>
    <property type="match status" value="1"/>
</dbReference>
<dbReference type="Gene3D" id="3.30.200.20">
    <property type="entry name" value="Phosphorylase Kinase, domain 1"/>
    <property type="match status" value="1"/>
</dbReference>
<dbReference type="Gene3D" id="1.10.510.10">
    <property type="entry name" value="Transferase(Phosphotransferase) domain 1"/>
    <property type="match status" value="1"/>
</dbReference>
<dbReference type="InterPro" id="IPR011009">
    <property type="entry name" value="Kinase-like_dom_sf"/>
</dbReference>
<dbReference type="InterPro" id="IPR000719">
    <property type="entry name" value="Prot_kinase_dom"/>
</dbReference>
<dbReference type="PANTHER" id="PTHR44167:SF23">
    <property type="entry name" value="CDC7 KINASE, ISOFORM A-RELATED"/>
    <property type="match status" value="1"/>
</dbReference>
<dbReference type="PANTHER" id="PTHR44167">
    <property type="entry name" value="OVARIAN-SPECIFIC SERINE/THREONINE-PROTEIN KINASE LOK-RELATED"/>
    <property type="match status" value="1"/>
</dbReference>
<dbReference type="Pfam" id="PF00069">
    <property type="entry name" value="Pkinase"/>
    <property type="match status" value="2"/>
</dbReference>
<dbReference type="SMART" id="SM00220">
    <property type="entry name" value="S_TKc"/>
    <property type="match status" value="1"/>
</dbReference>
<dbReference type="SUPFAM" id="SSF56112">
    <property type="entry name" value="Protein kinase-like (PK-like)"/>
    <property type="match status" value="1"/>
</dbReference>
<dbReference type="PROSITE" id="PS50011">
    <property type="entry name" value="PROTEIN_KINASE_DOM"/>
    <property type="match status" value="1"/>
</dbReference>
<accession>Q9UQY9</accession>
<protein>
    <recommendedName>
        <fullName>Cell cycle protein kinase spo4</fullName>
        <ecNumber>2.7.11.1</ecNumber>
    </recommendedName>
    <alternativeName>
        <fullName>Sporulation-specific protein 4</fullName>
    </alternativeName>
</protein>
<reference key="1">
    <citation type="journal article" date="2002" name="Mol. Cell. Biol.">
        <title>Novel fission yeast Cdc7-Dbf4-like kinase complex required for the initiation and progression of meiotic second division.</title>
        <authorList>
            <person name="Nakamura T."/>
            <person name="Nakamura-Kubo M."/>
            <person name="Nakamura M."/>
            <person name="Shimoda C."/>
        </authorList>
    </citation>
    <scope>NUCLEOTIDE SEQUENCE [MRNA]</scope>
    <scope>FUNCTION</scope>
    <scope>INTERACTION WITH SPO6</scope>
    <scope>SUBCELLULAR LOCATION</scope>
    <scope>MUTAGENESIS OF THR-264</scope>
</reference>
<reference key="2">
    <citation type="journal article" date="2002" name="Nature">
        <title>The genome sequence of Schizosaccharomyces pombe.</title>
        <authorList>
            <person name="Wood V."/>
            <person name="Gwilliam R."/>
            <person name="Rajandream M.A."/>
            <person name="Lyne M.H."/>
            <person name="Lyne R."/>
            <person name="Stewart A."/>
            <person name="Sgouros J.G."/>
            <person name="Peat N."/>
            <person name="Hayles J."/>
            <person name="Baker S.G."/>
            <person name="Basham D."/>
            <person name="Bowman S."/>
            <person name="Brooks K."/>
            <person name="Brown D."/>
            <person name="Brown S."/>
            <person name="Chillingworth T."/>
            <person name="Churcher C.M."/>
            <person name="Collins M."/>
            <person name="Connor R."/>
            <person name="Cronin A."/>
            <person name="Davis P."/>
            <person name="Feltwell T."/>
            <person name="Fraser A."/>
            <person name="Gentles S."/>
            <person name="Goble A."/>
            <person name="Hamlin N."/>
            <person name="Harris D.E."/>
            <person name="Hidalgo J."/>
            <person name="Hodgson G."/>
            <person name="Holroyd S."/>
            <person name="Hornsby T."/>
            <person name="Howarth S."/>
            <person name="Huckle E.J."/>
            <person name="Hunt S."/>
            <person name="Jagels K."/>
            <person name="James K.D."/>
            <person name="Jones L."/>
            <person name="Jones M."/>
            <person name="Leather S."/>
            <person name="McDonald S."/>
            <person name="McLean J."/>
            <person name="Mooney P."/>
            <person name="Moule S."/>
            <person name="Mungall K.L."/>
            <person name="Murphy L.D."/>
            <person name="Niblett D."/>
            <person name="Odell C."/>
            <person name="Oliver K."/>
            <person name="O'Neil S."/>
            <person name="Pearson D."/>
            <person name="Quail M.A."/>
            <person name="Rabbinowitsch E."/>
            <person name="Rutherford K.M."/>
            <person name="Rutter S."/>
            <person name="Saunders D."/>
            <person name="Seeger K."/>
            <person name="Sharp S."/>
            <person name="Skelton J."/>
            <person name="Simmonds M.N."/>
            <person name="Squares R."/>
            <person name="Squares S."/>
            <person name="Stevens K."/>
            <person name="Taylor K."/>
            <person name="Taylor R.G."/>
            <person name="Tivey A."/>
            <person name="Walsh S.V."/>
            <person name="Warren T."/>
            <person name="Whitehead S."/>
            <person name="Woodward J.R."/>
            <person name="Volckaert G."/>
            <person name="Aert R."/>
            <person name="Robben J."/>
            <person name="Grymonprez B."/>
            <person name="Weltjens I."/>
            <person name="Vanstreels E."/>
            <person name="Rieger M."/>
            <person name="Schaefer M."/>
            <person name="Mueller-Auer S."/>
            <person name="Gabel C."/>
            <person name="Fuchs M."/>
            <person name="Duesterhoeft A."/>
            <person name="Fritzc C."/>
            <person name="Holzer E."/>
            <person name="Moestl D."/>
            <person name="Hilbert H."/>
            <person name="Borzym K."/>
            <person name="Langer I."/>
            <person name="Beck A."/>
            <person name="Lehrach H."/>
            <person name="Reinhardt R."/>
            <person name="Pohl T.M."/>
            <person name="Eger P."/>
            <person name="Zimmermann W."/>
            <person name="Wedler H."/>
            <person name="Wambutt R."/>
            <person name="Purnelle B."/>
            <person name="Goffeau A."/>
            <person name="Cadieu E."/>
            <person name="Dreano S."/>
            <person name="Gloux S."/>
            <person name="Lelaure V."/>
            <person name="Mottier S."/>
            <person name="Galibert F."/>
            <person name="Aves S.J."/>
            <person name="Xiang Z."/>
            <person name="Hunt C."/>
            <person name="Moore K."/>
            <person name="Hurst S.M."/>
            <person name="Lucas M."/>
            <person name="Rochet M."/>
            <person name="Gaillardin C."/>
            <person name="Tallada V.A."/>
            <person name="Garzon A."/>
            <person name="Thode G."/>
            <person name="Daga R.R."/>
            <person name="Cruzado L."/>
            <person name="Jimenez J."/>
            <person name="Sanchez M."/>
            <person name="del Rey F."/>
            <person name="Benito J."/>
            <person name="Dominguez A."/>
            <person name="Revuelta J.L."/>
            <person name="Moreno S."/>
            <person name="Armstrong J."/>
            <person name="Forsburg S.L."/>
            <person name="Cerutti L."/>
            <person name="Lowe T."/>
            <person name="McCombie W.R."/>
            <person name="Paulsen I."/>
            <person name="Potashkin J."/>
            <person name="Shpakovski G.V."/>
            <person name="Ussery D."/>
            <person name="Barrell B.G."/>
            <person name="Nurse P."/>
        </authorList>
    </citation>
    <scope>NUCLEOTIDE SEQUENCE [LARGE SCALE GENOMIC DNA]</scope>
    <source>
        <strain>972 / ATCC 24843</strain>
    </source>
</reference>
<evidence type="ECO:0000255" key="1">
    <source>
        <dbReference type="PROSITE-ProRule" id="PRU00159"/>
    </source>
</evidence>
<evidence type="ECO:0000269" key="2">
    <source>
    </source>
</evidence>
<evidence type="ECO:0000305" key="3"/>
<comment type="function">
    <text evidence="2">Required for the initiation of meiosis II and progression through anaphase II.</text>
</comment>
<comment type="catalytic activity">
    <reaction>
        <text>L-seryl-[protein] + ATP = O-phospho-L-seryl-[protein] + ADP + H(+)</text>
        <dbReference type="Rhea" id="RHEA:17989"/>
        <dbReference type="Rhea" id="RHEA-COMP:9863"/>
        <dbReference type="Rhea" id="RHEA-COMP:11604"/>
        <dbReference type="ChEBI" id="CHEBI:15378"/>
        <dbReference type="ChEBI" id="CHEBI:29999"/>
        <dbReference type="ChEBI" id="CHEBI:30616"/>
        <dbReference type="ChEBI" id="CHEBI:83421"/>
        <dbReference type="ChEBI" id="CHEBI:456216"/>
        <dbReference type="EC" id="2.7.11.1"/>
    </reaction>
</comment>
<comment type="catalytic activity">
    <reaction>
        <text>L-threonyl-[protein] + ATP = O-phospho-L-threonyl-[protein] + ADP + H(+)</text>
        <dbReference type="Rhea" id="RHEA:46608"/>
        <dbReference type="Rhea" id="RHEA-COMP:11060"/>
        <dbReference type="Rhea" id="RHEA-COMP:11605"/>
        <dbReference type="ChEBI" id="CHEBI:15378"/>
        <dbReference type="ChEBI" id="CHEBI:30013"/>
        <dbReference type="ChEBI" id="CHEBI:30616"/>
        <dbReference type="ChEBI" id="CHEBI:61977"/>
        <dbReference type="ChEBI" id="CHEBI:456216"/>
        <dbReference type="EC" id="2.7.11.1"/>
    </reaction>
</comment>
<comment type="subunit">
    <text evidence="2">Interacts with spo6.</text>
</comment>
<comment type="subcellular location">
    <subcellularLocation>
        <location evidence="2">Nucleus</location>
    </subcellularLocation>
</comment>
<comment type="similarity">
    <text evidence="1">Belongs to the protein kinase superfamily. Ser/Thr protein kinase family. CDC7 subfamily.</text>
</comment>
<name>SPO4_SCHPO</name>
<feature type="chain" id="PRO_0000086673" description="Cell cycle protein kinase spo4">
    <location>
        <begin position="1"/>
        <end position="429"/>
    </location>
</feature>
<feature type="domain" description="Protein kinase" evidence="1">
    <location>
        <begin position="40"/>
        <end position="402"/>
    </location>
</feature>
<feature type="active site" description="Proton acceptor" evidence="1">
    <location>
        <position position="182"/>
    </location>
</feature>
<feature type="binding site" evidence="1">
    <location>
        <begin position="46"/>
        <end position="54"/>
    </location>
    <ligand>
        <name>ATP</name>
        <dbReference type="ChEBI" id="CHEBI:30616"/>
    </ligand>
</feature>
<feature type="binding site" evidence="1">
    <location>
        <position position="95"/>
    </location>
    <ligand>
        <name>ATP</name>
        <dbReference type="ChEBI" id="CHEBI:30616"/>
    </ligand>
</feature>
<feature type="modified residue" description="Phosphothreonine" evidence="3">
    <location>
        <position position="264"/>
    </location>
</feature>
<feature type="mutagenesis site" description="No activity." evidence="2">
    <original>T</original>
    <variation>A</variation>
    <variation>E</variation>
    <location>
        <position position="264"/>
    </location>
</feature>
<keyword id="KW-0067">ATP-binding</keyword>
<keyword id="KW-0131">Cell cycle</keyword>
<keyword id="KW-0132">Cell division</keyword>
<keyword id="KW-0418">Kinase</keyword>
<keyword id="KW-0469">Meiosis</keyword>
<keyword id="KW-0547">Nucleotide-binding</keyword>
<keyword id="KW-0539">Nucleus</keyword>
<keyword id="KW-0597">Phosphoprotein</keyword>
<keyword id="KW-1185">Reference proteome</keyword>
<keyword id="KW-0723">Serine/threonine-protein kinase</keyword>
<keyword id="KW-0749">Sporulation</keyword>
<keyword id="KW-0808">Transferase</keyword>
<organism>
    <name type="scientific">Schizosaccharomyces pombe (strain 972 / ATCC 24843)</name>
    <name type="common">Fission yeast</name>
    <dbReference type="NCBI Taxonomy" id="284812"/>
    <lineage>
        <taxon>Eukaryota</taxon>
        <taxon>Fungi</taxon>
        <taxon>Dikarya</taxon>
        <taxon>Ascomycota</taxon>
        <taxon>Taphrinomycotina</taxon>
        <taxon>Schizosaccharomycetes</taxon>
        <taxon>Schizosaccharomycetales</taxon>
        <taxon>Schizosaccharomycetaceae</taxon>
        <taxon>Schizosaccharomyces</taxon>
    </lineage>
</organism>
<gene>
    <name type="primary">spo4</name>
    <name type="ORF">SPBC21C3.18</name>
</gene>
<proteinExistence type="evidence at protein level"/>
<sequence length="429" mass="49155">MLSMLLPFGNSGVYASDVDREDRPEIAKLVQAFPTIEEDYHVVKLVGAGSFSSVFKAVDRHFDSYDNSYWISSQIEDQMPHDKTKRPKNHFVALKRIYATVLPSRIQTELEMLHELRGSDCVLNMITAVRHQDQVLIVLPFIQHAEFRDFYMKYSLPEIGAYLRDLLKGLAHIDAKGIIHRDIKPGNFAWNPYTQRGVILDFGLAQWQEADAPTENCCVDKLRKLKQEGKYYDYFPFEKTIADPPEGYLLHDPRPTKRADRAGTRGFRAPEVLFRCQNQTSSIDVWSVGVILLCFLTHRYPFFRCEDDIDAIVELAHIFGRNGMSNCALLHGQIWSDNIPTLLDQKHNWLDLIASITKNDENLILETSSDYQVALAIDLLDKLLELHPSKRVKAKTALQHEFFNACGVTRSGFEAENPFRSDFPSTVEQ</sequence>